<protein>
    <recommendedName>
        <fullName>ATP-dependent RNA helicase DDX19A</fullName>
        <ecNumber evidence="3">3.6.4.13</ecNumber>
    </recommendedName>
    <alternativeName>
        <fullName>DDX19-like protein</fullName>
    </alternativeName>
    <alternativeName>
        <fullName>DEAD box protein 19A</fullName>
    </alternativeName>
</protein>
<evidence type="ECO:0000250" key="1"/>
<evidence type="ECO:0000250" key="2">
    <source>
        <dbReference type="UniProtKB" id="Q9QY15"/>
    </source>
</evidence>
<evidence type="ECO:0000250" key="3">
    <source>
        <dbReference type="UniProtKB" id="Q9UMR2"/>
    </source>
</evidence>
<evidence type="ECO:0000255" key="4">
    <source>
        <dbReference type="PROSITE-ProRule" id="PRU00541"/>
    </source>
</evidence>
<evidence type="ECO:0000255" key="5">
    <source>
        <dbReference type="PROSITE-ProRule" id="PRU00542"/>
    </source>
</evidence>
<evidence type="ECO:0000303" key="6">
    <source>
    </source>
</evidence>
<evidence type="ECO:0000305" key="7"/>
<evidence type="ECO:0007744" key="8">
    <source>
    </source>
</evidence>
<evidence type="ECO:0007744" key="9">
    <source>
    </source>
</evidence>
<evidence type="ECO:0007744" key="10">
    <source>
    </source>
</evidence>
<evidence type="ECO:0007744" key="11">
    <source>
    </source>
</evidence>
<evidence type="ECO:0007744" key="12">
    <source>
    </source>
</evidence>
<sequence length="478" mass="53975">MATDSWALAVDEQEAAVKSMTNLQIKEEKVKADTNGIIKTSTTAEKTDEEEKEDRAAQSLLNKLIRSNLVDNTNQVEVLQRDPNSPLYSVKSFEELRLKPQLLQGVYAMGFNRPSKIQENALPMMLAEPPQNLIAQSQSGTGKTAAFVLAMLSRVEPSDRYPQCLCLSPTYELALQTGKVIEQMGKFYPELKLAYAVRGNKLERGQKISEQIVIGTPGTVLDWCSKLKFIDPKKIKVFVLDEADVMIATQGHQDQSIRIQRMLPRNCQMLLFSATFEDSVWKFAQKVVPDPNVIKLKREEETLDTIKQYYVLCSSRDEKFQALCNLYGAITIAQAMIFCHTRKTASWLAAELSKEGHQVALLSGEMMVEQRAAVIERFREGKEKVLVTTNVCARGIDVEQVSVVINFDLPVDKDGNPDNETYLHRIGRTGRFGKRGLAVNMVDSKHSMNILNRIQEHFNKKIERLDTDDLDEIEKIAN</sequence>
<reference key="1">
    <citation type="journal article" date="2004" name="Nat. Genet.">
        <title>Complete sequencing and characterization of 21,243 full-length human cDNAs.</title>
        <authorList>
            <person name="Ota T."/>
            <person name="Suzuki Y."/>
            <person name="Nishikawa T."/>
            <person name="Otsuki T."/>
            <person name="Sugiyama T."/>
            <person name="Irie R."/>
            <person name="Wakamatsu A."/>
            <person name="Hayashi K."/>
            <person name="Sato H."/>
            <person name="Nagai K."/>
            <person name="Kimura K."/>
            <person name="Makita H."/>
            <person name="Sekine M."/>
            <person name="Obayashi M."/>
            <person name="Nishi T."/>
            <person name="Shibahara T."/>
            <person name="Tanaka T."/>
            <person name="Ishii S."/>
            <person name="Yamamoto J."/>
            <person name="Saito K."/>
            <person name="Kawai Y."/>
            <person name="Isono Y."/>
            <person name="Nakamura Y."/>
            <person name="Nagahari K."/>
            <person name="Murakami K."/>
            <person name="Yasuda T."/>
            <person name="Iwayanagi T."/>
            <person name="Wagatsuma M."/>
            <person name="Shiratori A."/>
            <person name="Sudo H."/>
            <person name="Hosoiri T."/>
            <person name="Kaku Y."/>
            <person name="Kodaira H."/>
            <person name="Kondo H."/>
            <person name="Sugawara M."/>
            <person name="Takahashi M."/>
            <person name="Kanda K."/>
            <person name="Yokoi T."/>
            <person name="Furuya T."/>
            <person name="Kikkawa E."/>
            <person name="Omura Y."/>
            <person name="Abe K."/>
            <person name="Kamihara K."/>
            <person name="Katsuta N."/>
            <person name="Sato K."/>
            <person name="Tanikawa M."/>
            <person name="Yamazaki M."/>
            <person name="Ninomiya K."/>
            <person name="Ishibashi T."/>
            <person name="Yamashita H."/>
            <person name="Murakawa K."/>
            <person name="Fujimori K."/>
            <person name="Tanai H."/>
            <person name="Kimata M."/>
            <person name="Watanabe M."/>
            <person name="Hiraoka S."/>
            <person name="Chiba Y."/>
            <person name="Ishida S."/>
            <person name="Ono Y."/>
            <person name="Takiguchi S."/>
            <person name="Watanabe S."/>
            <person name="Yosida M."/>
            <person name="Hotuta T."/>
            <person name="Kusano J."/>
            <person name="Kanehori K."/>
            <person name="Takahashi-Fujii A."/>
            <person name="Hara H."/>
            <person name="Tanase T.-O."/>
            <person name="Nomura Y."/>
            <person name="Togiya S."/>
            <person name="Komai F."/>
            <person name="Hara R."/>
            <person name="Takeuchi K."/>
            <person name="Arita M."/>
            <person name="Imose N."/>
            <person name="Musashino K."/>
            <person name="Yuuki H."/>
            <person name="Oshima A."/>
            <person name="Sasaki N."/>
            <person name="Aotsuka S."/>
            <person name="Yoshikawa Y."/>
            <person name="Matsunawa H."/>
            <person name="Ichihara T."/>
            <person name="Shiohata N."/>
            <person name="Sano S."/>
            <person name="Moriya S."/>
            <person name="Momiyama H."/>
            <person name="Satoh N."/>
            <person name="Takami S."/>
            <person name="Terashima Y."/>
            <person name="Suzuki O."/>
            <person name="Nakagawa S."/>
            <person name="Senoh A."/>
            <person name="Mizoguchi H."/>
            <person name="Goto Y."/>
            <person name="Shimizu F."/>
            <person name="Wakebe H."/>
            <person name="Hishigaki H."/>
            <person name="Watanabe T."/>
            <person name="Sugiyama A."/>
            <person name="Takemoto M."/>
            <person name="Kawakami B."/>
            <person name="Yamazaki M."/>
            <person name="Watanabe K."/>
            <person name="Kumagai A."/>
            <person name="Itakura S."/>
            <person name="Fukuzumi Y."/>
            <person name="Fujimori Y."/>
            <person name="Komiyama M."/>
            <person name="Tashiro H."/>
            <person name="Tanigami A."/>
            <person name="Fujiwara T."/>
            <person name="Ono T."/>
            <person name="Yamada K."/>
            <person name="Fujii Y."/>
            <person name="Ozaki K."/>
            <person name="Hirao M."/>
            <person name="Ohmori Y."/>
            <person name="Kawabata A."/>
            <person name="Hikiji T."/>
            <person name="Kobatake N."/>
            <person name="Inagaki H."/>
            <person name="Ikema Y."/>
            <person name="Okamoto S."/>
            <person name="Okitani R."/>
            <person name="Kawakami T."/>
            <person name="Noguchi S."/>
            <person name="Itoh T."/>
            <person name="Shigeta K."/>
            <person name="Senba T."/>
            <person name="Matsumura K."/>
            <person name="Nakajima Y."/>
            <person name="Mizuno T."/>
            <person name="Morinaga M."/>
            <person name="Sasaki M."/>
            <person name="Togashi T."/>
            <person name="Oyama M."/>
            <person name="Hata H."/>
            <person name="Watanabe M."/>
            <person name="Komatsu T."/>
            <person name="Mizushima-Sugano J."/>
            <person name="Satoh T."/>
            <person name="Shirai Y."/>
            <person name="Takahashi Y."/>
            <person name="Nakagawa K."/>
            <person name="Okumura K."/>
            <person name="Nagase T."/>
            <person name="Nomura N."/>
            <person name="Kikuchi H."/>
            <person name="Masuho Y."/>
            <person name="Yamashita R."/>
            <person name="Nakai K."/>
            <person name="Yada T."/>
            <person name="Nakamura Y."/>
            <person name="Ohara O."/>
            <person name="Isogai T."/>
            <person name="Sugano S."/>
        </authorList>
    </citation>
    <scope>NUCLEOTIDE SEQUENCE [LARGE SCALE MRNA] (ISOFORMS 1 AND 2)</scope>
    <source>
        <tissue>Brain</tissue>
        <tissue>Placenta</tissue>
    </source>
</reference>
<reference key="2">
    <citation type="submission" date="2005-04" db="EMBL/GenBank/DDBJ databases">
        <authorList>
            <person name="Suzuki Y."/>
            <person name="Sugano S."/>
            <person name="Totoki Y."/>
            <person name="Toyoda A."/>
            <person name="Takeda T."/>
            <person name="Sakaki Y."/>
            <person name="Tanaka A."/>
            <person name="Yokoyama S."/>
        </authorList>
    </citation>
    <scope>NUCLEOTIDE SEQUENCE [LARGE SCALE MRNA] (ISOFORM 1)</scope>
    <source>
        <tissue>Gastric mucosa</tissue>
    </source>
</reference>
<reference key="3">
    <citation type="journal article" date="2007" name="BMC Genomics">
        <title>The full-ORF clone resource of the German cDNA consortium.</title>
        <authorList>
            <person name="Bechtel S."/>
            <person name="Rosenfelder H."/>
            <person name="Duda A."/>
            <person name="Schmidt C.P."/>
            <person name="Ernst U."/>
            <person name="Wellenreuther R."/>
            <person name="Mehrle A."/>
            <person name="Schuster C."/>
            <person name="Bahr A."/>
            <person name="Bloecker H."/>
            <person name="Heubner D."/>
            <person name="Hoerlein A."/>
            <person name="Michel G."/>
            <person name="Wedler H."/>
            <person name="Koehrer K."/>
            <person name="Ottenwaelder B."/>
            <person name="Poustka A."/>
            <person name="Wiemann S."/>
            <person name="Schupp I."/>
        </authorList>
    </citation>
    <scope>NUCLEOTIDE SEQUENCE [LARGE SCALE MRNA] (ISOFORM 1)</scope>
    <source>
        <tissue>Stomach</tissue>
    </source>
</reference>
<reference key="4">
    <citation type="journal article" date="2004" name="Nature">
        <title>The sequence and analysis of duplication-rich human chromosome 16.</title>
        <authorList>
            <person name="Martin J."/>
            <person name="Han C."/>
            <person name="Gordon L.A."/>
            <person name="Terry A."/>
            <person name="Prabhakar S."/>
            <person name="She X."/>
            <person name="Xie G."/>
            <person name="Hellsten U."/>
            <person name="Chan Y.M."/>
            <person name="Altherr M."/>
            <person name="Couronne O."/>
            <person name="Aerts A."/>
            <person name="Bajorek E."/>
            <person name="Black S."/>
            <person name="Blumer H."/>
            <person name="Branscomb E."/>
            <person name="Brown N.C."/>
            <person name="Bruno W.J."/>
            <person name="Buckingham J.M."/>
            <person name="Callen D.F."/>
            <person name="Campbell C.S."/>
            <person name="Campbell M.L."/>
            <person name="Campbell E.W."/>
            <person name="Caoile C."/>
            <person name="Challacombe J.F."/>
            <person name="Chasteen L.A."/>
            <person name="Chertkov O."/>
            <person name="Chi H.C."/>
            <person name="Christensen M."/>
            <person name="Clark L.M."/>
            <person name="Cohn J.D."/>
            <person name="Denys M."/>
            <person name="Detter J.C."/>
            <person name="Dickson M."/>
            <person name="Dimitrijevic-Bussod M."/>
            <person name="Escobar J."/>
            <person name="Fawcett J.J."/>
            <person name="Flowers D."/>
            <person name="Fotopulos D."/>
            <person name="Glavina T."/>
            <person name="Gomez M."/>
            <person name="Gonzales E."/>
            <person name="Goodstein D."/>
            <person name="Goodwin L.A."/>
            <person name="Grady D.L."/>
            <person name="Grigoriev I."/>
            <person name="Groza M."/>
            <person name="Hammon N."/>
            <person name="Hawkins T."/>
            <person name="Haydu L."/>
            <person name="Hildebrand C.E."/>
            <person name="Huang W."/>
            <person name="Israni S."/>
            <person name="Jett J."/>
            <person name="Jewett P.B."/>
            <person name="Kadner K."/>
            <person name="Kimball H."/>
            <person name="Kobayashi A."/>
            <person name="Krawczyk M.-C."/>
            <person name="Leyba T."/>
            <person name="Longmire J.L."/>
            <person name="Lopez F."/>
            <person name="Lou Y."/>
            <person name="Lowry S."/>
            <person name="Ludeman T."/>
            <person name="Manohar C.F."/>
            <person name="Mark G.A."/>
            <person name="McMurray K.L."/>
            <person name="Meincke L.J."/>
            <person name="Morgan J."/>
            <person name="Moyzis R.K."/>
            <person name="Mundt M.O."/>
            <person name="Munk A.C."/>
            <person name="Nandkeshwar R.D."/>
            <person name="Pitluck S."/>
            <person name="Pollard M."/>
            <person name="Predki P."/>
            <person name="Parson-Quintana B."/>
            <person name="Ramirez L."/>
            <person name="Rash S."/>
            <person name="Retterer J."/>
            <person name="Ricke D.O."/>
            <person name="Robinson D.L."/>
            <person name="Rodriguez A."/>
            <person name="Salamov A."/>
            <person name="Saunders E.H."/>
            <person name="Scott D."/>
            <person name="Shough T."/>
            <person name="Stallings R.L."/>
            <person name="Stalvey M."/>
            <person name="Sutherland R.D."/>
            <person name="Tapia R."/>
            <person name="Tesmer J.G."/>
            <person name="Thayer N."/>
            <person name="Thompson L.S."/>
            <person name="Tice H."/>
            <person name="Torney D.C."/>
            <person name="Tran-Gyamfi M."/>
            <person name="Tsai M."/>
            <person name="Ulanovsky L.E."/>
            <person name="Ustaszewska A."/>
            <person name="Vo N."/>
            <person name="White P.S."/>
            <person name="Williams A.L."/>
            <person name="Wills P.L."/>
            <person name="Wu J.-R."/>
            <person name="Wu K."/>
            <person name="Yang J."/>
            <person name="DeJong P."/>
            <person name="Bruce D."/>
            <person name="Doggett N.A."/>
            <person name="Deaven L."/>
            <person name="Schmutz J."/>
            <person name="Grimwood J."/>
            <person name="Richardson P."/>
            <person name="Rokhsar D.S."/>
            <person name="Eichler E.E."/>
            <person name="Gilna P."/>
            <person name="Lucas S.M."/>
            <person name="Myers R.M."/>
            <person name="Rubin E.M."/>
            <person name="Pennacchio L.A."/>
        </authorList>
    </citation>
    <scope>NUCLEOTIDE SEQUENCE [LARGE SCALE GENOMIC DNA]</scope>
</reference>
<reference key="5">
    <citation type="submission" date="2005-07" db="EMBL/GenBank/DDBJ databases">
        <authorList>
            <person name="Mural R.J."/>
            <person name="Istrail S."/>
            <person name="Sutton G.G."/>
            <person name="Florea L."/>
            <person name="Halpern A.L."/>
            <person name="Mobarry C.M."/>
            <person name="Lippert R."/>
            <person name="Walenz B."/>
            <person name="Shatkay H."/>
            <person name="Dew I."/>
            <person name="Miller J.R."/>
            <person name="Flanigan M.J."/>
            <person name="Edwards N.J."/>
            <person name="Bolanos R."/>
            <person name="Fasulo D."/>
            <person name="Halldorsson B.V."/>
            <person name="Hannenhalli S."/>
            <person name="Turner R."/>
            <person name="Yooseph S."/>
            <person name="Lu F."/>
            <person name="Nusskern D.R."/>
            <person name="Shue B.C."/>
            <person name="Zheng X.H."/>
            <person name="Zhong F."/>
            <person name="Delcher A.L."/>
            <person name="Huson D.H."/>
            <person name="Kravitz S.A."/>
            <person name="Mouchard L."/>
            <person name="Reinert K."/>
            <person name="Remington K.A."/>
            <person name="Clark A.G."/>
            <person name="Waterman M.S."/>
            <person name="Eichler E.E."/>
            <person name="Adams M.D."/>
            <person name="Hunkapiller M.W."/>
            <person name="Myers E.W."/>
            <person name="Venter J.C."/>
        </authorList>
    </citation>
    <scope>NUCLEOTIDE SEQUENCE [LARGE SCALE GENOMIC DNA]</scope>
</reference>
<reference key="6">
    <citation type="journal article" date="2004" name="Genome Res.">
        <title>The status, quality, and expansion of the NIH full-length cDNA project: the Mammalian Gene Collection (MGC).</title>
        <authorList>
            <consortium name="The MGC Project Team"/>
        </authorList>
    </citation>
    <scope>NUCLEOTIDE SEQUENCE [LARGE SCALE MRNA] (ISOFORM 1)</scope>
    <source>
        <tissue>Brain</tissue>
        <tissue>Muscle</tissue>
    </source>
</reference>
<reference key="7">
    <citation type="journal article" date="2009" name="Anal. Chem.">
        <title>Lys-N and trypsin cover complementary parts of the phosphoproteome in a refined SCX-based approach.</title>
        <authorList>
            <person name="Gauci S."/>
            <person name="Helbig A.O."/>
            <person name="Slijper M."/>
            <person name="Krijgsveld J."/>
            <person name="Heck A.J."/>
            <person name="Mohammed S."/>
        </authorList>
    </citation>
    <scope>ACETYLATION [LARGE SCALE ANALYSIS] AT ALA-2</scope>
    <scope>CLEAVAGE OF INITIATOR METHIONINE [LARGE SCALE ANALYSIS]</scope>
    <scope>IDENTIFICATION BY MASS SPECTROMETRY [LARGE SCALE ANALYSIS]</scope>
</reference>
<reference key="8">
    <citation type="journal article" date="2011" name="BMC Syst. Biol.">
        <title>Initial characterization of the human central proteome.</title>
        <authorList>
            <person name="Burkard T.R."/>
            <person name="Planyavsky M."/>
            <person name="Kaupe I."/>
            <person name="Breitwieser F.P."/>
            <person name="Buerckstuemmer T."/>
            <person name="Bennett K.L."/>
            <person name="Superti-Furga G."/>
            <person name="Colinge J."/>
        </authorList>
    </citation>
    <scope>IDENTIFICATION BY MASS SPECTROMETRY [LARGE SCALE ANALYSIS]</scope>
</reference>
<reference key="9">
    <citation type="journal article" date="2012" name="Mol. Cell. Proteomics">
        <title>Comparative large-scale characterisation of plant vs. mammal proteins reveals similar and idiosyncratic N-alpha acetylation features.</title>
        <authorList>
            <person name="Bienvenut W.V."/>
            <person name="Sumpton D."/>
            <person name="Martinez A."/>
            <person name="Lilla S."/>
            <person name="Espagne C."/>
            <person name="Meinnel T."/>
            <person name="Giglione C."/>
        </authorList>
    </citation>
    <scope>ACETYLATION [LARGE SCALE ANALYSIS] AT ALA-2</scope>
    <scope>CLEAVAGE OF INITIATOR METHIONINE [LARGE SCALE ANALYSIS]</scope>
    <scope>IDENTIFICATION BY MASS SPECTROMETRY [LARGE SCALE ANALYSIS]</scope>
</reference>
<reference key="10">
    <citation type="journal article" date="2014" name="Nat. Struct. Mol. Biol.">
        <title>Uncovering global SUMOylation signaling networks in a site-specific manner.</title>
        <authorList>
            <person name="Hendriks I.A."/>
            <person name="D'Souza R.C."/>
            <person name="Yang B."/>
            <person name="Verlaan-de Vries M."/>
            <person name="Mann M."/>
            <person name="Vertegaal A.C."/>
        </authorList>
    </citation>
    <scope>SUMOYLATION [LARGE SCALE ANALYSIS] AT LYS-26</scope>
    <scope>IDENTIFICATION BY MASS SPECTROMETRY [LARGE SCALE ANALYSIS]</scope>
</reference>
<reference key="11">
    <citation type="journal article" date="2014" name="Proc. Natl. Acad. Sci. U.S.A.">
        <title>Mapping of SUMO sites and analysis of SUMOylation changes induced by external stimuli.</title>
        <authorList>
            <person name="Impens F."/>
            <person name="Radoshevich L."/>
            <person name="Cossart P."/>
            <person name="Ribet D."/>
        </authorList>
    </citation>
    <scope>SUMOYLATION [LARGE SCALE ANALYSIS] AT LYS-26</scope>
    <scope>IDENTIFICATION BY MASS SPECTROMETRY [LARGE SCALE ANALYSIS]</scope>
</reference>
<reference key="12">
    <citation type="journal article" date="2017" name="Nat. Struct. Mol. Biol.">
        <title>Site-specific mapping of the human SUMO proteome reveals co-modification with phosphorylation.</title>
        <authorList>
            <person name="Hendriks I.A."/>
            <person name="Lyon D."/>
            <person name="Young C."/>
            <person name="Jensen L.J."/>
            <person name="Vertegaal A.C."/>
            <person name="Nielsen M.L."/>
        </authorList>
    </citation>
    <scope>SUMOYLATION [LARGE SCALE ANALYSIS] AT LYS-26</scope>
    <scope>IDENTIFICATION BY MASS SPECTROMETRY [LARGE SCALE ANALYSIS]</scope>
</reference>
<feature type="initiator methionine" description="Removed" evidence="8 9">
    <location>
        <position position="1"/>
    </location>
</feature>
<feature type="chain" id="PRO_0000055021" description="ATP-dependent RNA helicase DDX19A">
    <location>
        <begin position="2"/>
        <end position="478"/>
    </location>
</feature>
<feature type="domain" description="Helicase ATP-binding" evidence="4">
    <location>
        <begin position="124"/>
        <end position="294"/>
    </location>
</feature>
<feature type="domain" description="Helicase C-terminal" evidence="5">
    <location>
        <begin position="305"/>
        <end position="473"/>
    </location>
</feature>
<feature type="region of interest" description="N-terminal lobe" evidence="1">
    <location>
        <begin position="2"/>
        <end position="299"/>
    </location>
</feature>
<feature type="region of interest" description="N-terminal helix" evidence="1">
    <location>
        <begin position="54"/>
        <end position="67"/>
    </location>
</feature>
<feature type="region of interest" description="C-terminal lobe" evidence="1">
    <location>
        <begin position="300"/>
        <end position="478"/>
    </location>
</feature>
<feature type="short sequence motif" description="Q motif">
    <location>
        <begin position="91"/>
        <end position="119"/>
    </location>
</feature>
<feature type="short sequence motif" description="DEAD box">
    <location>
        <begin position="241"/>
        <end position="244"/>
    </location>
</feature>
<feature type="binding site" evidence="1">
    <location>
        <position position="118"/>
    </location>
    <ligand>
        <name>ATP</name>
        <dbReference type="ChEBI" id="CHEBI:30616"/>
    </ligand>
</feature>
<feature type="binding site" evidence="4">
    <location>
        <begin position="137"/>
        <end position="144"/>
    </location>
    <ligand>
        <name>ATP</name>
        <dbReference type="ChEBI" id="CHEBI:30616"/>
    </ligand>
</feature>
<feature type="binding site" evidence="1">
    <location>
        <position position="428"/>
    </location>
    <ligand>
        <name>ATP</name>
        <dbReference type="ChEBI" id="CHEBI:30616"/>
    </ligand>
</feature>
<feature type="binding site" evidence="1">
    <location>
        <position position="431"/>
    </location>
    <ligand>
        <name>ATP</name>
        <dbReference type="ChEBI" id="CHEBI:30616"/>
    </ligand>
</feature>
<feature type="modified residue" description="N-acetylalanine" evidence="8 9">
    <location>
        <position position="2"/>
    </location>
</feature>
<feature type="modified residue" description="Phosphothreonine" evidence="2">
    <location>
        <position position="42"/>
    </location>
</feature>
<feature type="cross-link" description="Glycyl lysine isopeptide (Lys-Gly) (interchain with G-Cter in SUMO1); alternate" evidence="10">
    <location>
        <position position="26"/>
    </location>
</feature>
<feature type="cross-link" description="Glycyl lysine isopeptide (Lys-Gly) (interchain with G-Cter in SUMO2); alternate" evidence="10 11 12">
    <location>
        <position position="26"/>
    </location>
</feature>
<feature type="splice variant" id="VSP_056954" description="In isoform 2." evidence="6">
    <original>MATDSWALAVDEQEAAVKSMTNLQIKEEKVKADTNGIIKTSTTAEKTDEEEKEDRAAQSLLNKLIRSNLVDNTNQVEVLQRDPNSPLYSVKSFEELRL</original>
    <variation>MSGTFLIR</variation>
    <location>
        <begin position="1"/>
        <end position="98"/>
    </location>
</feature>
<feature type="sequence conflict" description="In Ref. 2; BAD96982." evidence="7" ref="2">
    <original>E</original>
    <variation>G</variation>
    <location>
        <position position="463"/>
    </location>
</feature>
<name>DD19A_HUMAN</name>
<gene>
    <name type="primary">DDX19A</name>
    <name type="synonym">DDX19L</name>
</gene>
<keyword id="KW-0007">Acetylation</keyword>
<keyword id="KW-0025">Alternative splicing</keyword>
<keyword id="KW-0067">ATP-binding</keyword>
<keyword id="KW-0963">Cytoplasm</keyword>
<keyword id="KW-0347">Helicase</keyword>
<keyword id="KW-0378">Hydrolase</keyword>
<keyword id="KW-1017">Isopeptide bond</keyword>
<keyword id="KW-0547">Nucleotide-binding</keyword>
<keyword id="KW-0539">Nucleus</keyword>
<keyword id="KW-0597">Phosphoprotein</keyword>
<keyword id="KW-1267">Proteomics identification</keyword>
<keyword id="KW-1185">Reference proteome</keyword>
<keyword id="KW-0694">RNA-binding</keyword>
<keyword id="KW-0832">Ubl conjugation</keyword>
<proteinExistence type="evidence at protein level"/>
<dbReference type="EC" id="3.6.4.13" evidence="3"/>
<dbReference type="EMBL" id="AK001988">
    <property type="protein sequence ID" value="BAA92022.1"/>
    <property type="molecule type" value="mRNA"/>
</dbReference>
<dbReference type="EMBL" id="AK299504">
    <property type="protein sequence ID" value="BAG61459.1"/>
    <property type="molecule type" value="mRNA"/>
</dbReference>
<dbReference type="EMBL" id="AK223262">
    <property type="protein sequence ID" value="BAD96982.1"/>
    <property type="molecule type" value="mRNA"/>
</dbReference>
<dbReference type="EMBL" id="AL832970">
    <property type="protein sequence ID" value="CAH10622.1"/>
    <property type="molecule type" value="mRNA"/>
</dbReference>
<dbReference type="EMBL" id="AC012184">
    <property type="status" value="NOT_ANNOTATED_CDS"/>
    <property type="molecule type" value="Genomic_DNA"/>
</dbReference>
<dbReference type="EMBL" id="CH471241">
    <property type="protein sequence ID" value="EAW51826.1"/>
    <property type="molecule type" value="Genomic_DNA"/>
</dbReference>
<dbReference type="EMBL" id="BC005162">
    <property type="protein sequence ID" value="AAH05162.1"/>
    <property type="molecule type" value="mRNA"/>
</dbReference>
<dbReference type="EMBL" id="BC006544">
    <property type="protein sequence ID" value="AAH06544.1"/>
    <property type="molecule type" value="mRNA"/>
</dbReference>
<dbReference type="EMBL" id="BC137496">
    <property type="protein sequence ID" value="AAI37497.1"/>
    <property type="molecule type" value="mRNA"/>
</dbReference>
<dbReference type="EMBL" id="BC137497">
    <property type="protein sequence ID" value="AAI37498.1"/>
    <property type="molecule type" value="mRNA"/>
</dbReference>
<dbReference type="CCDS" id="CCDS10889.1">
    <molecule id="Q9NUU7-1"/>
</dbReference>
<dbReference type="RefSeq" id="NP_001307451.1">
    <property type="nucleotide sequence ID" value="NM_001320522.1"/>
</dbReference>
<dbReference type="RefSeq" id="NP_001307454.1">
    <molecule id="Q9NUU7-2"/>
    <property type="nucleotide sequence ID" value="NM_001320525.2"/>
</dbReference>
<dbReference type="RefSeq" id="NP_001307455.1">
    <property type="nucleotide sequence ID" value="NM_001320526.1"/>
</dbReference>
<dbReference type="RefSeq" id="NP_001307456.1">
    <property type="nucleotide sequence ID" value="NM_001320527.1"/>
</dbReference>
<dbReference type="RefSeq" id="NP_060802.1">
    <molecule id="Q9NUU7-1"/>
    <property type="nucleotide sequence ID" value="NM_018332.5"/>
</dbReference>
<dbReference type="SMR" id="Q9NUU7"/>
<dbReference type="BioGRID" id="120592">
    <property type="interactions" value="93"/>
</dbReference>
<dbReference type="FunCoup" id="Q9NUU7">
    <property type="interactions" value="3068"/>
</dbReference>
<dbReference type="IntAct" id="Q9NUU7">
    <property type="interactions" value="55"/>
</dbReference>
<dbReference type="MINT" id="Q9NUU7"/>
<dbReference type="STRING" id="9606.ENSP00000306117"/>
<dbReference type="TCDB" id="1.I.1.1.3">
    <property type="family name" value="the nuclear pore complex (npc) family"/>
</dbReference>
<dbReference type="GlyGen" id="Q9NUU7">
    <property type="glycosylation" value="1 site, 1 O-linked glycan (1 site)"/>
</dbReference>
<dbReference type="iPTMnet" id="Q9NUU7"/>
<dbReference type="MetOSite" id="Q9NUU7"/>
<dbReference type="PhosphoSitePlus" id="Q9NUU7"/>
<dbReference type="SwissPalm" id="Q9NUU7"/>
<dbReference type="BioMuta" id="DDX19A"/>
<dbReference type="DMDM" id="73919226"/>
<dbReference type="jPOST" id="Q9NUU7"/>
<dbReference type="MassIVE" id="Q9NUU7"/>
<dbReference type="PaxDb" id="9606-ENSP00000306117"/>
<dbReference type="PeptideAtlas" id="Q9NUU7"/>
<dbReference type="ProteomicsDB" id="4981"/>
<dbReference type="ProteomicsDB" id="82721">
    <molecule id="Q9NUU7-1"/>
</dbReference>
<dbReference type="Pumba" id="Q9NUU7"/>
<dbReference type="Antibodypedia" id="16355">
    <property type="antibodies" value="96 antibodies from 19 providers"/>
</dbReference>
<dbReference type="DNASU" id="55308"/>
<dbReference type="Ensembl" id="ENST00000302243.12">
    <molecule id="Q9NUU7-1"/>
    <property type="protein sequence ID" value="ENSP00000306117.7"/>
    <property type="gene ID" value="ENSG00000168872.17"/>
</dbReference>
<dbReference type="GeneID" id="55308"/>
<dbReference type="KEGG" id="hsa:55308"/>
<dbReference type="MANE-Select" id="ENST00000302243.12">
    <property type="protein sequence ID" value="ENSP00000306117.7"/>
    <property type="RefSeq nucleotide sequence ID" value="NM_018332.5"/>
    <property type="RefSeq protein sequence ID" value="NP_060802.1"/>
</dbReference>
<dbReference type="UCSC" id="uc002eyv.4">
    <molecule id="Q9NUU7-1"/>
    <property type="organism name" value="human"/>
</dbReference>
<dbReference type="AGR" id="HGNC:25628"/>
<dbReference type="CTD" id="55308"/>
<dbReference type="DisGeNET" id="55308"/>
<dbReference type="GeneCards" id="DDX19A"/>
<dbReference type="HGNC" id="HGNC:25628">
    <property type="gene designation" value="DDX19A"/>
</dbReference>
<dbReference type="HPA" id="ENSG00000168872">
    <property type="expression patterns" value="Low tissue specificity"/>
</dbReference>
<dbReference type="neXtProt" id="NX_Q9NUU7"/>
<dbReference type="OpenTargets" id="ENSG00000168872"/>
<dbReference type="PharmGKB" id="PA134894996"/>
<dbReference type="VEuPathDB" id="HostDB:ENSG00000168872"/>
<dbReference type="eggNOG" id="KOG0332">
    <property type="taxonomic scope" value="Eukaryota"/>
</dbReference>
<dbReference type="GeneTree" id="ENSGT00940000154417"/>
<dbReference type="InParanoid" id="Q9NUU7"/>
<dbReference type="OMA" id="REYAIME"/>
<dbReference type="OrthoDB" id="10265785at2759"/>
<dbReference type="PAN-GO" id="Q9NUU7">
    <property type="GO annotations" value="5 GO annotations based on evolutionary models"/>
</dbReference>
<dbReference type="PhylomeDB" id="Q9NUU7"/>
<dbReference type="TreeFam" id="TF314957"/>
<dbReference type="PathwayCommons" id="Q9NUU7"/>
<dbReference type="SignaLink" id="Q9NUU7"/>
<dbReference type="BioGRID-ORCS" id="55308">
    <property type="hits" value="390 hits in 1167 CRISPR screens"/>
</dbReference>
<dbReference type="CD-CODE" id="DEE660B4">
    <property type="entry name" value="Stress granule"/>
</dbReference>
<dbReference type="ChiTaRS" id="DDX19A">
    <property type="organism name" value="human"/>
</dbReference>
<dbReference type="GenomeRNAi" id="55308"/>
<dbReference type="Pharos" id="Q9NUU7">
    <property type="development level" value="Tdark"/>
</dbReference>
<dbReference type="PRO" id="PR:Q9NUU7"/>
<dbReference type="Proteomes" id="UP000005640">
    <property type="component" value="Chromosome 16"/>
</dbReference>
<dbReference type="RNAct" id="Q9NUU7">
    <property type="molecule type" value="protein"/>
</dbReference>
<dbReference type="Bgee" id="ENSG00000168872">
    <property type="expression patterns" value="Expressed in gastrocnemius and 107 other cell types or tissues"/>
</dbReference>
<dbReference type="ExpressionAtlas" id="Q9NUU7">
    <property type="expression patterns" value="baseline and differential"/>
</dbReference>
<dbReference type="GO" id="GO:0010494">
    <property type="term" value="C:cytoplasmic stress granule"/>
    <property type="evidence" value="ECO:0000318"/>
    <property type="project" value="GO_Central"/>
</dbReference>
<dbReference type="GO" id="GO:0016020">
    <property type="term" value="C:membrane"/>
    <property type="evidence" value="ECO:0007005"/>
    <property type="project" value="UniProtKB"/>
</dbReference>
<dbReference type="GO" id="GO:0005654">
    <property type="term" value="C:nucleoplasm"/>
    <property type="evidence" value="ECO:0007669"/>
    <property type="project" value="UniProtKB-SubCell"/>
</dbReference>
<dbReference type="GO" id="GO:0005634">
    <property type="term" value="C:nucleus"/>
    <property type="evidence" value="ECO:0000318"/>
    <property type="project" value="GO_Central"/>
</dbReference>
<dbReference type="GO" id="GO:0005524">
    <property type="term" value="F:ATP binding"/>
    <property type="evidence" value="ECO:0007669"/>
    <property type="project" value="UniProtKB-KW"/>
</dbReference>
<dbReference type="GO" id="GO:0016887">
    <property type="term" value="F:ATP hydrolysis activity"/>
    <property type="evidence" value="ECO:0007669"/>
    <property type="project" value="RHEA"/>
</dbReference>
<dbReference type="GO" id="GO:0003729">
    <property type="term" value="F:mRNA binding"/>
    <property type="evidence" value="ECO:0000318"/>
    <property type="project" value="GO_Central"/>
</dbReference>
<dbReference type="GO" id="GO:0003724">
    <property type="term" value="F:RNA helicase activity"/>
    <property type="evidence" value="ECO:0000318"/>
    <property type="project" value="GO_Central"/>
</dbReference>
<dbReference type="GO" id="GO:0016973">
    <property type="term" value="P:poly(A)+ mRNA export from nucleus"/>
    <property type="evidence" value="ECO:0000318"/>
    <property type="project" value="GO_Central"/>
</dbReference>
<dbReference type="GO" id="GO:0043065">
    <property type="term" value="P:positive regulation of apoptotic process"/>
    <property type="evidence" value="ECO:0007669"/>
    <property type="project" value="Ensembl"/>
</dbReference>
<dbReference type="GO" id="GO:0010043">
    <property type="term" value="P:response to zinc ion"/>
    <property type="evidence" value="ECO:0007669"/>
    <property type="project" value="Ensembl"/>
</dbReference>
<dbReference type="CDD" id="cd18787">
    <property type="entry name" value="SF2_C_DEAD"/>
    <property type="match status" value="1"/>
</dbReference>
<dbReference type="FunFam" id="3.40.50.300:FF:000318">
    <property type="entry name" value="ATP-dependent RNA helicase DDX19B"/>
    <property type="match status" value="1"/>
</dbReference>
<dbReference type="FunFam" id="3.40.50.300:FF:000357">
    <property type="entry name" value="ATP-dependent RNA helicase DDX19B"/>
    <property type="match status" value="1"/>
</dbReference>
<dbReference type="Gene3D" id="6.10.250.2170">
    <property type="match status" value="1"/>
</dbReference>
<dbReference type="Gene3D" id="3.40.50.300">
    <property type="entry name" value="P-loop containing nucleotide triphosphate hydrolases"/>
    <property type="match status" value="2"/>
</dbReference>
<dbReference type="InterPro" id="IPR011545">
    <property type="entry name" value="DEAD/DEAH_box_helicase_dom"/>
</dbReference>
<dbReference type="InterPro" id="IPR014001">
    <property type="entry name" value="Helicase_ATP-bd"/>
</dbReference>
<dbReference type="InterPro" id="IPR001650">
    <property type="entry name" value="Helicase_C-like"/>
</dbReference>
<dbReference type="InterPro" id="IPR027417">
    <property type="entry name" value="P-loop_NTPase"/>
</dbReference>
<dbReference type="InterPro" id="IPR014014">
    <property type="entry name" value="RNA_helicase_DEAD_Q_motif"/>
</dbReference>
<dbReference type="PANTHER" id="PTHR47958">
    <property type="entry name" value="ATP-DEPENDENT RNA HELICASE DBP3"/>
    <property type="match status" value="1"/>
</dbReference>
<dbReference type="Pfam" id="PF00270">
    <property type="entry name" value="DEAD"/>
    <property type="match status" value="1"/>
</dbReference>
<dbReference type="Pfam" id="PF00271">
    <property type="entry name" value="Helicase_C"/>
    <property type="match status" value="1"/>
</dbReference>
<dbReference type="SMART" id="SM00487">
    <property type="entry name" value="DEXDc"/>
    <property type="match status" value="1"/>
</dbReference>
<dbReference type="SMART" id="SM00490">
    <property type="entry name" value="HELICc"/>
    <property type="match status" value="1"/>
</dbReference>
<dbReference type="SUPFAM" id="SSF52540">
    <property type="entry name" value="P-loop containing nucleoside triphosphate hydrolases"/>
    <property type="match status" value="1"/>
</dbReference>
<dbReference type="PROSITE" id="PS51192">
    <property type="entry name" value="HELICASE_ATP_BIND_1"/>
    <property type="match status" value="1"/>
</dbReference>
<dbReference type="PROSITE" id="PS51194">
    <property type="entry name" value="HELICASE_CTER"/>
    <property type="match status" value="1"/>
</dbReference>
<dbReference type="PROSITE" id="PS51195">
    <property type="entry name" value="Q_MOTIF"/>
    <property type="match status" value="1"/>
</dbReference>
<accession>Q9NUU7</accession>
<accession>B2RPL0</accession>
<accession>B4DRZ7</accession>
<accession>Q53FM0</accession>
<comment type="function">
    <text evidence="3">ATP-dependent RNA helicase involved in mRNA export from the nucleus. Rather than unwinding RNA duplexes, DDX19 functions as a remodeler of ribonucleoprotein particles, whereby proteins bound to nuclear mRNA are dissociated and replaced by cytoplasmic mRNA binding proteins.</text>
</comment>
<comment type="catalytic activity">
    <reaction evidence="3">
        <text>ATP + H2O = ADP + phosphate + H(+)</text>
        <dbReference type="Rhea" id="RHEA:13065"/>
        <dbReference type="ChEBI" id="CHEBI:15377"/>
        <dbReference type="ChEBI" id="CHEBI:15378"/>
        <dbReference type="ChEBI" id="CHEBI:30616"/>
        <dbReference type="ChEBI" id="CHEBI:43474"/>
        <dbReference type="ChEBI" id="CHEBI:456216"/>
        <dbReference type="EC" id="3.6.4.13"/>
    </reaction>
</comment>
<comment type="interaction">
    <interactant intactId="EBI-740301">
        <id>Q9NUU7</id>
    </interactant>
    <interactant intactId="EBI-349854">
        <id>P13569</id>
        <label>CFTR</label>
    </interactant>
    <organismsDiffer>false</organismsDiffer>
    <experiments>9</experiments>
</comment>
<comment type="interaction">
    <interactant intactId="EBI-740301">
        <id>Q9NUU7</id>
    </interactant>
    <interactant intactId="EBI-12180013">
        <id>O43310-2</id>
        <label>CTIF</label>
    </interactant>
    <organismsDiffer>false</organismsDiffer>
    <experiments>4</experiments>
</comment>
<comment type="interaction">
    <interactant intactId="EBI-740301">
        <id>Q9NUU7</id>
    </interactant>
    <interactant intactId="EBI-373498">
        <id>A9UHW6</id>
        <label>MIF4GD</label>
    </interactant>
    <organismsDiffer>false</organismsDiffer>
    <experiments>9</experiments>
</comment>
<comment type="interaction">
    <interactant intactId="EBI-740301">
        <id>Q9NUU7</id>
    </interactant>
    <interactant intactId="EBI-9118295">
        <id>A9UHW6-2</id>
        <label>MIF4GD</label>
    </interactant>
    <organismsDiffer>false</organismsDiffer>
    <experiments>3</experiments>
</comment>
<comment type="subcellular location">
    <subcellularLocation>
        <location evidence="3">Cytoplasm</location>
    </subcellularLocation>
    <subcellularLocation>
        <location evidence="3">Nucleus</location>
        <location evidence="3">Nucleoplasm</location>
    </subcellularLocation>
    <text evidence="3">Associates with the nuclear pore complex cytoplasmic fibrils.</text>
</comment>
<comment type="alternative products">
    <event type="alternative splicing"/>
    <isoform>
        <id>Q9NUU7-1</id>
        <name>1</name>
        <sequence type="displayed"/>
    </isoform>
    <isoform>
        <id>Q9NUU7-2</id>
        <name>2</name>
        <sequence type="described" ref="VSP_056954"/>
    </isoform>
</comment>
<comment type="domain">
    <text evidence="1">The N-terminal extension helix acts as an autoinhibitory domain, preventing ATP hydrolysis, unless the N-terminus of the protein is displaced by RNA binding, allowing cleft closure to bring key side chains into position for catalysis.</text>
</comment>
<comment type="similarity">
    <text evidence="7">Belongs to the DEAD box helicase family. DDX19/DBP5 subfamily.</text>
</comment>
<organism>
    <name type="scientific">Homo sapiens</name>
    <name type="common">Human</name>
    <dbReference type="NCBI Taxonomy" id="9606"/>
    <lineage>
        <taxon>Eukaryota</taxon>
        <taxon>Metazoa</taxon>
        <taxon>Chordata</taxon>
        <taxon>Craniata</taxon>
        <taxon>Vertebrata</taxon>
        <taxon>Euteleostomi</taxon>
        <taxon>Mammalia</taxon>
        <taxon>Eutheria</taxon>
        <taxon>Euarchontoglires</taxon>
        <taxon>Primates</taxon>
        <taxon>Haplorrhini</taxon>
        <taxon>Catarrhini</taxon>
        <taxon>Hominidae</taxon>
        <taxon>Homo</taxon>
    </lineage>
</organism>